<dbReference type="EMBL" id="U00089">
    <property type="protein sequence ID" value="AAB96140.1"/>
    <property type="molecule type" value="Genomic_DNA"/>
</dbReference>
<dbReference type="PIR" id="S73818">
    <property type="entry name" value="S73818"/>
</dbReference>
<dbReference type="RefSeq" id="NP_110032.1">
    <property type="nucleotide sequence ID" value="NC_000912.1"/>
</dbReference>
<dbReference type="RefSeq" id="WP_010874700.1">
    <property type="nucleotide sequence ID" value="NZ_OU342337.1"/>
</dbReference>
<dbReference type="SMR" id="P75434"/>
<dbReference type="STRING" id="272634.MPN_344"/>
<dbReference type="EnsemblBacteria" id="AAB96140">
    <property type="protein sequence ID" value="AAB96140"/>
    <property type="gene ID" value="MPN_344"/>
</dbReference>
<dbReference type="KEGG" id="mpn:MPN_344"/>
<dbReference type="PATRIC" id="fig|272634.6.peg.368"/>
<dbReference type="HOGENOM" id="CLU_111101_0_0_14"/>
<dbReference type="BioCyc" id="MPNE272634:G1GJ3-544-MONOMER"/>
<dbReference type="Proteomes" id="UP000000808">
    <property type="component" value="Chromosome"/>
</dbReference>
<dbReference type="Gene3D" id="1.20.5.170">
    <property type="match status" value="1"/>
</dbReference>
<dbReference type="Gene3D" id="6.10.250.40">
    <property type="match status" value="1"/>
</dbReference>
<dbReference type="InterPro" id="IPR002862">
    <property type="entry name" value="DUF16"/>
</dbReference>
<dbReference type="Pfam" id="PF01519">
    <property type="entry name" value="DUF16"/>
    <property type="match status" value="1"/>
</dbReference>
<dbReference type="SUPFAM" id="SSF144266">
    <property type="entry name" value="MPN010-like"/>
    <property type="match status" value="1"/>
</dbReference>
<accession>P75434</accession>
<proteinExistence type="inferred from homology"/>
<organism>
    <name type="scientific">Mycoplasma pneumoniae (strain ATCC 29342 / M129 / Subtype 1)</name>
    <name type="common">Mycoplasmoides pneumoniae</name>
    <dbReference type="NCBI Taxonomy" id="272634"/>
    <lineage>
        <taxon>Bacteria</taxon>
        <taxon>Bacillati</taxon>
        <taxon>Mycoplasmatota</taxon>
        <taxon>Mycoplasmoidales</taxon>
        <taxon>Mycoplasmoidaceae</taxon>
        <taxon>Mycoplasmoides</taxon>
    </lineage>
</organism>
<gene>
    <name type="ordered locus">MPN_344</name>
    <name type="ORF">H91_orf216</name>
    <name type="ORF">MP492</name>
</gene>
<evidence type="ECO:0000256" key="1">
    <source>
        <dbReference type="SAM" id="MobiDB-lite"/>
    </source>
</evidence>
<evidence type="ECO:0000305" key="2"/>
<protein>
    <recommendedName>
        <fullName>UPF0134 protein MPN_344</fullName>
    </recommendedName>
</protein>
<name>Y344_MYCPN</name>
<comment type="similarity">
    <text evidence="2">Belongs to the UPF0134 family.</text>
</comment>
<keyword id="KW-1185">Reference proteome</keyword>
<feature type="chain" id="PRO_0000221606" description="UPF0134 protein MPN_344">
    <location>
        <begin position="1"/>
        <end position="216"/>
    </location>
</feature>
<feature type="region of interest" description="Disordered" evidence="1">
    <location>
        <begin position="47"/>
        <end position="104"/>
    </location>
</feature>
<feature type="region of interest" description="Disordered" evidence="1">
    <location>
        <begin position="194"/>
        <end position="216"/>
    </location>
</feature>
<feature type="compositionally biased region" description="Basic and acidic residues" evidence="1">
    <location>
        <begin position="47"/>
        <end position="62"/>
    </location>
</feature>
<feature type="compositionally biased region" description="Pro residues" evidence="1">
    <location>
        <begin position="68"/>
        <end position="78"/>
    </location>
</feature>
<feature type="compositionally biased region" description="Low complexity" evidence="1">
    <location>
        <begin position="83"/>
        <end position="93"/>
    </location>
</feature>
<reference key="1">
    <citation type="journal article" date="1996" name="Nucleic Acids Res.">
        <title>Complete sequence analysis of the genome of the bacterium Mycoplasma pneumoniae.</title>
        <authorList>
            <person name="Himmelreich R."/>
            <person name="Hilbert H."/>
            <person name="Plagens H."/>
            <person name="Pirkl E."/>
            <person name="Li B.-C."/>
            <person name="Herrmann R."/>
        </authorList>
    </citation>
    <scope>NUCLEOTIDE SEQUENCE [LARGE SCALE GENOMIC DNA]</scope>
    <source>
        <strain>ATCC 29342 / M129 / Subtype 1</strain>
    </source>
</reference>
<sequence length="216" mass="25343">MPKIISKRKFNILRKTKEEIFSQIVYTKKRNGLHKAAKEYYFKDKDFTIIEDQQDRPDKPEELDTPDIPKPPKPPKGPDQPEEPGQPGGPDDPNSGNKKMPKPDEFVTHRQLQEFKKDLLVELHEIFPTKPELKRVEEKVDVLFELQKAQGEQIRIQGEQIKELKVEQKAQGETLQLILQTLQKMNDRLDKIEGKMDKMESRMDKMETRLDKLESK</sequence>